<sequence length="379" mass="43027">MTNIRKTHPLIKIINHSFIDLPAPSNISAWWNFGSLLGLCLIIQIITGLFLAMHYTSDTMTAFSSVTHICRDVNYGWLIRYMHANGASMFFICLFLHVGRGLYYGSYNYFETWNIGVILLFAVMATAFMGYVLPWGQMSFWGATVITNLLSAIPYIGTTLVEWIWGGFSVDKATLTRFFAFHFILPFIITALVVVHLLFLHETGSNNPSGLISDSDKIPFHPYYTIKDILGILLLILTLMTLVLFSPDLLGDPDNYMPANPLSTPPHIKPEWYFLFAYAILRSIPNKLGGVLALVFSILILMLFPLLHLSKQRSMMFRPLSQCIFWILVADLFTLTWIGGQPVEHPYIIIGQLASILYFTIILLILPTVSMIENKLLKW</sequence>
<accession>Q9TF52</accession>
<accession>Q9TF78</accession>
<organism>
    <name type="scientific">Spermophilus dauricus</name>
    <name type="common">Daurian ground squirrel</name>
    <dbReference type="NCBI Taxonomy" id="99837"/>
    <lineage>
        <taxon>Eukaryota</taxon>
        <taxon>Metazoa</taxon>
        <taxon>Chordata</taxon>
        <taxon>Craniata</taxon>
        <taxon>Vertebrata</taxon>
        <taxon>Euteleostomi</taxon>
        <taxon>Mammalia</taxon>
        <taxon>Eutheria</taxon>
        <taxon>Euarchontoglires</taxon>
        <taxon>Glires</taxon>
        <taxon>Rodentia</taxon>
        <taxon>Sciuromorpha</taxon>
        <taxon>Sciuridae</taxon>
        <taxon>Xerinae</taxon>
        <taxon>Marmotini</taxon>
        <taxon>Spermophilus</taxon>
    </lineage>
</organism>
<keyword id="KW-0249">Electron transport</keyword>
<keyword id="KW-0349">Heme</keyword>
<keyword id="KW-0408">Iron</keyword>
<keyword id="KW-0472">Membrane</keyword>
<keyword id="KW-0479">Metal-binding</keyword>
<keyword id="KW-0496">Mitochondrion</keyword>
<keyword id="KW-0999">Mitochondrion inner membrane</keyword>
<keyword id="KW-1185">Reference proteome</keyword>
<keyword id="KW-0679">Respiratory chain</keyword>
<keyword id="KW-0812">Transmembrane</keyword>
<keyword id="KW-1133">Transmembrane helix</keyword>
<keyword id="KW-0813">Transport</keyword>
<keyword id="KW-0830">Ubiquinone</keyword>
<dbReference type="EMBL" id="AF157871">
    <property type="protein sequence ID" value="AAD50155.1"/>
    <property type="molecule type" value="Genomic_DNA"/>
</dbReference>
<dbReference type="EMBL" id="AF157899">
    <property type="protein sequence ID" value="AAD50183.1"/>
    <property type="molecule type" value="Genomic_DNA"/>
</dbReference>
<dbReference type="SMR" id="Q9TF52"/>
<dbReference type="Proteomes" id="UP000694422">
    <property type="component" value="Unplaced"/>
</dbReference>
<dbReference type="GO" id="GO:0005743">
    <property type="term" value="C:mitochondrial inner membrane"/>
    <property type="evidence" value="ECO:0007669"/>
    <property type="project" value="UniProtKB-SubCell"/>
</dbReference>
<dbReference type="GO" id="GO:0045275">
    <property type="term" value="C:respiratory chain complex III"/>
    <property type="evidence" value="ECO:0007669"/>
    <property type="project" value="InterPro"/>
</dbReference>
<dbReference type="GO" id="GO:0046872">
    <property type="term" value="F:metal ion binding"/>
    <property type="evidence" value="ECO:0007669"/>
    <property type="project" value="UniProtKB-KW"/>
</dbReference>
<dbReference type="GO" id="GO:0008121">
    <property type="term" value="F:ubiquinol-cytochrome-c reductase activity"/>
    <property type="evidence" value="ECO:0007669"/>
    <property type="project" value="InterPro"/>
</dbReference>
<dbReference type="GO" id="GO:0006122">
    <property type="term" value="P:mitochondrial electron transport, ubiquinol to cytochrome c"/>
    <property type="evidence" value="ECO:0007669"/>
    <property type="project" value="TreeGrafter"/>
</dbReference>
<dbReference type="CDD" id="cd00290">
    <property type="entry name" value="cytochrome_b_C"/>
    <property type="match status" value="1"/>
</dbReference>
<dbReference type="CDD" id="cd00284">
    <property type="entry name" value="Cytochrome_b_N"/>
    <property type="match status" value="1"/>
</dbReference>
<dbReference type="FunFam" id="1.20.810.10:FF:000002">
    <property type="entry name" value="Cytochrome b"/>
    <property type="match status" value="1"/>
</dbReference>
<dbReference type="Gene3D" id="1.20.810.10">
    <property type="entry name" value="Cytochrome Bc1 Complex, Chain C"/>
    <property type="match status" value="1"/>
</dbReference>
<dbReference type="InterPro" id="IPR005798">
    <property type="entry name" value="Cyt_b/b6_C"/>
</dbReference>
<dbReference type="InterPro" id="IPR036150">
    <property type="entry name" value="Cyt_b/b6_C_sf"/>
</dbReference>
<dbReference type="InterPro" id="IPR005797">
    <property type="entry name" value="Cyt_b/b6_N"/>
</dbReference>
<dbReference type="InterPro" id="IPR027387">
    <property type="entry name" value="Cytb/b6-like_sf"/>
</dbReference>
<dbReference type="InterPro" id="IPR030689">
    <property type="entry name" value="Cytochrome_b"/>
</dbReference>
<dbReference type="InterPro" id="IPR048260">
    <property type="entry name" value="Cytochrome_b_C_euk/bac"/>
</dbReference>
<dbReference type="InterPro" id="IPR048259">
    <property type="entry name" value="Cytochrome_b_N_euk/bac"/>
</dbReference>
<dbReference type="InterPro" id="IPR016174">
    <property type="entry name" value="Di-haem_cyt_TM"/>
</dbReference>
<dbReference type="PANTHER" id="PTHR19271">
    <property type="entry name" value="CYTOCHROME B"/>
    <property type="match status" value="1"/>
</dbReference>
<dbReference type="PANTHER" id="PTHR19271:SF16">
    <property type="entry name" value="CYTOCHROME B"/>
    <property type="match status" value="1"/>
</dbReference>
<dbReference type="Pfam" id="PF00032">
    <property type="entry name" value="Cytochrom_B_C"/>
    <property type="match status" value="1"/>
</dbReference>
<dbReference type="Pfam" id="PF00033">
    <property type="entry name" value="Cytochrome_B"/>
    <property type="match status" value="1"/>
</dbReference>
<dbReference type="PIRSF" id="PIRSF038885">
    <property type="entry name" value="COB"/>
    <property type="match status" value="1"/>
</dbReference>
<dbReference type="SUPFAM" id="SSF81648">
    <property type="entry name" value="a domain/subunit of cytochrome bc1 complex (Ubiquinol-cytochrome c reductase)"/>
    <property type="match status" value="1"/>
</dbReference>
<dbReference type="SUPFAM" id="SSF81342">
    <property type="entry name" value="Transmembrane di-heme cytochromes"/>
    <property type="match status" value="1"/>
</dbReference>
<dbReference type="PROSITE" id="PS51003">
    <property type="entry name" value="CYTB_CTER"/>
    <property type="match status" value="1"/>
</dbReference>
<dbReference type="PROSITE" id="PS51002">
    <property type="entry name" value="CYTB_NTER"/>
    <property type="match status" value="1"/>
</dbReference>
<protein>
    <recommendedName>
        <fullName>Cytochrome b</fullName>
    </recommendedName>
    <alternativeName>
        <fullName>Complex III subunit 3</fullName>
    </alternativeName>
    <alternativeName>
        <fullName>Complex III subunit III</fullName>
    </alternativeName>
    <alternativeName>
        <fullName>Cytochrome b-c1 complex subunit 3</fullName>
    </alternativeName>
    <alternativeName>
        <fullName>Ubiquinol-cytochrome-c reductase complex cytochrome b subunit</fullName>
    </alternativeName>
</protein>
<feature type="chain" id="PRO_0000255136" description="Cytochrome b">
    <location>
        <begin position="1"/>
        <end position="379"/>
    </location>
</feature>
<feature type="transmembrane region" description="Helical" evidence="2">
    <location>
        <begin position="33"/>
        <end position="53"/>
    </location>
</feature>
<feature type="transmembrane region" description="Helical" evidence="2">
    <location>
        <begin position="77"/>
        <end position="98"/>
    </location>
</feature>
<feature type="transmembrane region" description="Helical" evidence="2">
    <location>
        <begin position="113"/>
        <end position="133"/>
    </location>
</feature>
<feature type="transmembrane region" description="Helical" evidence="2">
    <location>
        <begin position="178"/>
        <end position="198"/>
    </location>
</feature>
<feature type="transmembrane region" description="Helical" evidence="2">
    <location>
        <begin position="226"/>
        <end position="246"/>
    </location>
</feature>
<feature type="transmembrane region" description="Helical" evidence="2">
    <location>
        <begin position="288"/>
        <end position="308"/>
    </location>
</feature>
<feature type="transmembrane region" description="Helical" evidence="2">
    <location>
        <begin position="320"/>
        <end position="340"/>
    </location>
</feature>
<feature type="transmembrane region" description="Helical" evidence="2">
    <location>
        <begin position="347"/>
        <end position="367"/>
    </location>
</feature>
<feature type="binding site" description="axial binding residue" evidence="2">
    <location>
        <position position="83"/>
    </location>
    <ligand>
        <name>heme b</name>
        <dbReference type="ChEBI" id="CHEBI:60344"/>
        <label>b562</label>
    </ligand>
    <ligandPart>
        <name>Fe</name>
        <dbReference type="ChEBI" id="CHEBI:18248"/>
    </ligandPart>
</feature>
<feature type="binding site" description="axial binding residue" evidence="2">
    <location>
        <position position="97"/>
    </location>
    <ligand>
        <name>heme b</name>
        <dbReference type="ChEBI" id="CHEBI:60344"/>
        <label>b566</label>
    </ligand>
    <ligandPart>
        <name>Fe</name>
        <dbReference type="ChEBI" id="CHEBI:18248"/>
    </ligandPart>
</feature>
<feature type="binding site" description="axial binding residue" evidence="2">
    <location>
        <position position="182"/>
    </location>
    <ligand>
        <name>heme b</name>
        <dbReference type="ChEBI" id="CHEBI:60344"/>
        <label>b562</label>
    </ligand>
    <ligandPart>
        <name>Fe</name>
        <dbReference type="ChEBI" id="CHEBI:18248"/>
    </ligandPart>
</feature>
<feature type="binding site" description="axial binding residue" evidence="2">
    <location>
        <position position="196"/>
    </location>
    <ligand>
        <name>heme b</name>
        <dbReference type="ChEBI" id="CHEBI:60344"/>
        <label>b566</label>
    </ligand>
    <ligandPart>
        <name>Fe</name>
        <dbReference type="ChEBI" id="CHEBI:18248"/>
    </ligandPart>
</feature>
<feature type="binding site" evidence="2">
    <location>
        <position position="201"/>
    </location>
    <ligand>
        <name>a ubiquinone</name>
        <dbReference type="ChEBI" id="CHEBI:16389"/>
    </ligand>
</feature>
<comment type="function">
    <text evidence="2">Component of the ubiquinol-cytochrome c reductase complex (complex III or cytochrome b-c1 complex) that is part of the mitochondrial respiratory chain. The b-c1 complex mediates electron transfer from ubiquinol to cytochrome c. Contributes to the generation of a proton gradient across the mitochondrial membrane that is then used for ATP synthesis.</text>
</comment>
<comment type="cofactor">
    <cofactor evidence="2">
        <name>heme b</name>
        <dbReference type="ChEBI" id="CHEBI:60344"/>
    </cofactor>
    <text evidence="2">Binds 2 heme b groups non-covalently.</text>
</comment>
<comment type="subunit">
    <text evidence="2">The cytochrome bc1 complex contains 11 subunits: 3 respiratory subunits (MT-CYB, CYC1 and UQCRFS1), 2 core proteins (UQCRC1 and UQCRC2) and 6 low-molecular weight proteins (UQCRH/QCR6, UQCRB/QCR7, UQCRQ/QCR8, UQCR10/QCR9, UQCR11/QCR10 and a cleavage product of UQCRFS1). This cytochrome bc1 complex then forms a dimer.</text>
</comment>
<comment type="subcellular location">
    <subcellularLocation>
        <location evidence="2">Mitochondrion inner membrane</location>
        <topology evidence="2">Multi-pass membrane protein</topology>
    </subcellularLocation>
</comment>
<comment type="miscellaneous">
    <text evidence="1">Heme 1 (or BL or b562) is low-potential and absorbs at about 562 nm, and heme 2 (or BH or b566) is high-potential and absorbs at about 566 nm.</text>
</comment>
<comment type="similarity">
    <text evidence="3 4">Belongs to the cytochrome b family.</text>
</comment>
<comment type="caution">
    <text evidence="2">The full-length protein contains only eight transmembrane helices, not nine as predicted by bioinformatics tools.</text>
</comment>
<name>CYB_SPEDA</name>
<evidence type="ECO:0000250" key="1"/>
<evidence type="ECO:0000250" key="2">
    <source>
        <dbReference type="UniProtKB" id="P00157"/>
    </source>
</evidence>
<evidence type="ECO:0000255" key="3">
    <source>
        <dbReference type="PROSITE-ProRule" id="PRU00967"/>
    </source>
</evidence>
<evidence type="ECO:0000255" key="4">
    <source>
        <dbReference type="PROSITE-ProRule" id="PRU00968"/>
    </source>
</evidence>
<geneLocation type="mitochondrion"/>
<proteinExistence type="inferred from homology"/>
<reference key="1">
    <citation type="journal article" date="2003" name="J. Mammal. Evol.">
        <title>Phylogeny and evolutionary history of the ground squirrels (Rodentia: Marmotinae).</title>
        <authorList>
            <person name="Harrison R.G."/>
            <person name="Bogdanowicz S.M."/>
            <person name="Hoffmann R.S."/>
            <person name="Yensen E."/>
            <person name="Sherman P.W."/>
        </authorList>
    </citation>
    <scope>NUCLEOTIDE SEQUENCE [GENOMIC DNA]</scope>
</reference>
<gene>
    <name type="primary">MT-CYB</name>
    <name type="synonym">COB</name>
    <name type="synonym">CYTB</name>
    <name type="synonym">MTCYB</name>
</gene>